<keyword id="KW-0496">Mitochondrion</keyword>
<keyword id="KW-1185">Reference proteome</keyword>
<keyword id="KW-0687">Ribonucleoprotein</keyword>
<keyword id="KW-0689">Ribosomal protein</keyword>
<keyword id="KW-0809">Transit peptide</keyword>
<accession>Q5RB44</accession>
<comment type="subunit">
    <text evidence="1">Component of the mitochondrial ribosome large subunit (39S) which comprises a 16S rRNA and about 50 distinct proteins.</text>
</comment>
<comment type="subcellular location">
    <subcellularLocation>
        <location evidence="1">Mitochondrion</location>
    </subcellularLocation>
</comment>
<comment type="similarity">
    <text evidence="3">Belongs to the mitochondrion-specific ribosomal protein mL53 family.</text>
</comment>
<organism>
    <name type="scientific">Pongo abelii</name>
    <name type="common">Sumatran orangutan</name>
    <name type="synonym">Pongo pygmaeus abelii</name>
    <dbReference type="NCBI Taxonomy" id="9601"/>
    <lineage>
        <taxon>Eukaryota</taxon>
        <taxon>Metazoa</taxon>
        <taxon>Chordata</taxon>
        <taxon>Craniata</taxon>
        <taxon>Vertebrata</taxon>
        <taxon>Euteleostomi</taxon>
        <taxon>Mammalia</taxon>
        <taxon>Eutheria</taxon>
        <taxon>Euarchontoglires</taxon>
        <taxon>Primates</taxon>
        <taxon>Haplorrhini</taxon>
        <taxon>Catarrhini</taxon>
        <taxon>Hominidae</taxon>
        <taxon>Pongo</taxon>
    </lineage>
</organism>
<feature type="transit peptide" description="Mitochondrion" evidence="2">
    <location>
        <begin position="1"/>
        <end status="unknown"/>
    </location>
</feature>
<feature type="chain" id="PRO_0000261666" description="Large ribosomal subunit protein mL53">
    <location>
        <begin status="unknown"/>
        <end position="112"/>
    </location>
</feature>
<reference key="1">
    <citation type="submission" date="2004-11" db="EMBL/GenBank/DDBJ databases">
        <authorList>
            <consortium name="The German cDNA consortium"/>
        </authorList>
    </citation>
    <scope>NUCLEOTIDE SEQUENCE [LARGE SCALE MRNA]</scope>
    <source>
        <tissue>Kidney</tissue>
    </source>
</reference>
<name>RM53_PONAB</name>
<proteinExistence type="inferred from homology"/>
<gene>
    <name type="primary">MRPL53</name>
</gene>
<dbReference type="EMBL" id="CR858811">
    <property type="protein sequence ID" value="CAH91016.1"/>
    <property type="molecule type" value="mRNA"/>
</dbReference>
<dbReference type="RefSeq" id="NP_001125586.1">
    <property type="nucleotide sequence ID" value="NM_001132114.2"/>
</dbReference>
<dbReference type="SMR" id="Q5RB44"/>
<dbReference type="FunCoup" id="Q5RB44">
    <property type="interactions" value="815"/>
</dbReference>
<dbReference type="GeneID" id="100172502"/>
<dbReference type="KEGG" id="pon:100172502"/>
<dbReference type="CTD" id="116540"/>
<dbReference type="InParanoid" id="Q5RB44"/>
<dbReference type="OrthoDB" id="6618793at2759"/>
<dbReference type="Proteomes" id="UP000001595">
    <property type="component" value="Unplaced"/>
</dbReference>
<dbReference type="GO" id="GO:0005762">
    <property type="term" value="C:mitochondrial large ribosomal subunit"/>
    <property type="evidence" value="ECO:0000250"/>
    <property type="project" value="UniProtKB"/>
</dbReference>
<dbReference type="FunFam" id="3.40.30.10:FF:000215">
    <property type="entry name" value="39S ribosomal protein L53, mitochondrial"/>
    <property type="match status" value="1"/>
</dbReference>
<dbReference type="Gene3D" id="3.40.30.10">
    <property type="entry name" value="Glutaredoxin"/>
    <property type="match status" value="1"/>
</dbReference>
<dbReference type="InterPro" id="IPR052473">
    <property type="entry name" value="mtLSU_mL53"/>
</dbReference>
<dbReference type="InterPro" id="IPR019716">
    <property type="entry name" value="Ribosomal_mL53"/>
</dbReference>
<dbReference type="PANTHER" id="PTHR33618">
    <property type="entry name" value="39S RIBOSOMAL PROTEIN L53, MITOCHONDRIAL"/>
    <property type="match status" value="1"/>
</dbReference>
<dbReference type="PANTHER" id="PTHR33618:SF1">
    <property type="entry name" value="LARGE RIBOSOMAL SUBUNIT PROTEIN ML53"/>
    <property type="match status" value="1"/>
</dbReference>
<dbReference type="Pfam" id="PF10780">
    <property type="entry name" value="MRP_L53"/>
    <property type="match status" value="1"/>
</dbReference>
<sequence length="112" mass="12113">MAAALARLGLRPVKQVRVQFCPFEKNVESTRTFLQAVSSEKVRSTNLNCPVIADVRHDGSEPCVDVLFGDGYRLIMRGAHLTALEMLTAFASHIRARDAAGSGDKPGADTGR</sequence>
<evidence type="ECO:0000250" key="1">
    <source>
        <dbReference type="UniProtKB" id="Q96EL3"/>
    </source>
</evidence>
<evidence type="ECO:0000255" key="2"/>
<evidence type="ECO:0000305" key="3"/>
<protein>
    <recommendedName>
        <fullName evidence="3">Large ribosomal subunit protein mL53</fullName>
    </recommendedName>
    <alternativeName>
        <fullName>39S ribosomal protein L53, mitochondrial</fullName>
        <shortName>L53mt</shortName>
        <shortName>MRP-L53</shortName>
    </alternativeName>
</protein>